<dbReference type="EMBL" id="CP000825">
    <property type="protein sequence ID" value="ABV51429.1"/>
    <property type="molecule type" value="Genomic_DNA"/>
</dbReference>
<dbReference type="RefSeq" id="WP_002805945.1">
    <property type="nucleotide sequence ID" value="NC_009840.1"/>
</dbReference>
<dbReference type="SMR" id="A8G748"/>
<dbReference type="STRING" id="93060.P9215_18161"/>
<dbReference type="KEGG" id="pmh:P9215_18161"/>
<dbReference type="eggNOG" id="COG0096">
    <property type="taxonomic scope" value="Bacteria"/>
</dbReference>
<dbReference type="HOGENOM" id="CLU_098428_0_2_3"/>
<dbReference type="OrthoDB" id="9802617at2"/>
<dbReference type="Proteomes" id="UP000002014">
    <property type="component" value="Chromosome"/>
</dbReference>
<dbReference type="GO" id="GO:1990904">
    <property type="term" value="C:ribonucleoprotein complex"/>
    <property type="evidence" value="ECO:0007669"/>
    <property type="project" value="UniProtKB-KW"/>
</dbReference>
<dbReference type="GO" id="GO:0005840">
    <property type="term" value="C:ribosome"/>
    <property type="evidence" value="ECO:0007669"/>
    <property type="project" value="UniProtKB-KW"/>
</dbReference>
<dbReference type="GO" id="GO:0019843">
    <property type="term" value="F:rRNA binding"/>
    <property type="evidence" value="ECO:0007669"/>
    <property type="project" value="UniProtKB-UniRule"/>
</dbReference>
<dbReference type="GO" id="GO:0003735">
    <property type="term" value="F:structural constituent of ribosome"/>
    <property type="evidence" value="ECO:0007669"/>
    <property type="project" value="InterPro"/>
</dbReference>
<dbReference type="GO" id="GO:0006412">
    <property type="term" value="P:translation"/>
    <property type="evidence" value="ECO:0007669"/>
    <property type="project" value="UniProtKB-UniRule"/>
</dbReference>
<dbReference type="FunFam" id="3.30.1370.30:FF:000002">
    <property type="entry name" value="30S ribosomal protein S8"/>
    <property type="match status" value="1"/>
</dbReference>
<dbReference type="FunFam" id="3.30.1490.10:FF:000001">
    <property type="entry name" value="30S ribosomal protein S8"/>
    <property type="match status" value="1"/>
</dbReference>
<dbReference type="Gene3D" id="3.30.1370.30">
    <property type="match status" value="1"/>
</dbReference>
<dbReference type="Gene3D" id="3.30.1490.10">
    <property type="match status" value="1"/>
</dbReference>
<dbReference type="HAMAP" id="MF_01302_B">
    <property type="entry name" value="Ribosomal_uS8_B"/>
    <property type="match status" value="1"/>
</dbReference>
<dbReference type="InterPro" id="IPR000630">
    <property type="entry name" value="Ribosomal_uS8"/>
</dbReference>
<dbReference type="InterPro" id="IPR047863">
    <property type="entry name" value="Ribosomal_uS8_CS"/>
</dbReference>
<dbReference type="InterPro" id="IPR035987">
    <property type="entry name" value="Ribosomal_uS8_sf"/>
</dbReference>
<dbReference type="NCBIfam" id="NF001109">
    <property type="entry name" value="PRK00136.1"/>
    <property type="match status" value="1"/>
</dbReference>
<dbReference type="PANTHER" id="PTHR11758">
    <property type="entry name" value="40S RIBOSOMAL PROTEIN S15A"/>
    <property type="match status" value="1"/>
</dbReference>
<dbReference type="Pfam" id="PF00410">
    <property type="entry name" value="Ribosomal_S8"/>
    <property type="match status" value="1"/>
</dbReference>
<dbReference type="SUPFAM" id="SSF56047">
    <property type="entry name" value="Ribosomal protein S8"/>
    <property type="match status" value="1"/>
</dbReference>
<dbReference type="PROSITE" id="PS00053">
    <property type="entry name" value="RIBOSOMAL_S8"/>
    <property type="match status" value="1"/>
</dbReference>
<gene>
    <name evidence="1" type="primary">rpsH</name>
    <name evidence="1" type="synonym">rps8</name>
    <name type="ordered locus">P9215_18161</name>
</gene>
<protein>
    <recommendedName>
        <fullName evidence="1">Small ribosomal subunit protein uS8</fullName>
    </recommendedName>
    <alternativeName>
        <fullName evidence="2">30S ribosomal protein S8</fullName>
    </alternativeName>
</protein>
<evidence type="ECO:0000255" key="1">
    <source>
        <dbReference type="HAMAP-Rule" id="MF_01302"/>
    </source>
</evidence>
<evidence type="ECO:0000305" key="2"/>
<accession>A8G748</accession>
<sequence>MSNHDPISDMLTRIRNASQKKHTTTTIPGSKMSLSIAKVLQKEGFISEINEEGEGYKSQIILGLKYSGKNKFPTIRSMQRVSKPGLRIYKNTRALPKVLGGLGVAIISTSKGVMSDRDARKQGIGGEVLCYVY</sequence>
<organism>
    <name type="scientific">Prochlorococcus marinus (strain MIT 9215)</name>
    <dbReference type="NCBI Taxonomy" id="93060"/>
    <lineage>
        <taxon>Bacteria</taxon>
        <taxon>Bacillati</taxon>
        <taxon>Cyanobacteriota</taxon>
        <taxon>Cyanophyceae</taxon>
        <taxon>Synechococcales</taxon>
        <taxon>Prochlorococcaceae</taxon>
        <taxon>Prochlorococcus</taxon>
    </lineage>
</organism>
<reference key="1">
    <citation type="journal article" date="2007" name="PLoS Genet.">
        <title>Patterns and implications of gene gain and loss in the evolution of Prochlorococcus.</title>
        <authorList>
            <person name="Kettler G.C."/>
            <person name="Martiny A.C."/>
            <person name="Huang K."/>
            <person name="Zucker J."/>
            <person name="Coleman M.L."/>
            <person name="Rodrigue S."/>
            <person name="Chen F."/>
            <person name="Lapidus A."/>
            <person name="Ferriera S."/>
            <person name="Johnson J."/>
            <person name="Steglich C."/>
            <person name="Church G.M."/>
            <person name="Richardson P."/>
            <person name="Chisholm S.W."/>
        </authorList>
    </citation>
    <scope>NUCLEOTIDE SEQUENCE [LARGE SCALE GENOMIC DNA]</scope>
    <source>
        <strain>MIT 9215</strain>
    </source>
</reference>
<comment type="function">
    <text evidence="1">One of the primary rRNA binding proteins, it binds directly to 16S rRNA central domain where it helps coordinate assembly of the platform of the 30S subunit.</text>
</comment>
<comment type="subunit">
    <text evidence="1">Part of the 30S ribosomal subunit. Contacts proteins S5 and S12.</text>
</comment>
<comment type="similarity">
    <text evidence="1">Belongs to the universal ribosomal protein uS8 family.</text>
</comment>
<proteinExistence type="inferred from homology"/>
<keyword id="KW-0687">Ribonucleoprotein</keyword>
<keyword id="KW-0689">Ribosomal protein</keyword>
<keyword id="KW-0694">RNA-binding</keyword>
<keyword id="KW-0699">rRNA-binding</keyword>
<feature type="chain" id="PRO_1000067489" description="Small ribosomal subunit protein uS8">
    <location>
        <begin position="1"/>
        <end position="133"/>
    </location>
</feature>
<name>RS8_PROM2</name>